<sequence>MLHKSPSRKRFASPLHLGCILTLTVLCLIAYYFALPDYLSVGKSSSRGAMDQKSDGTFRLKSIYRHGVGANHRLHQRLEVTPEVISAAGMLYQETTTQGQDFEDQEPLWTTNAEYATTNPFDFEFELRRMPLLMKRMKERDPEFIESYIYGETYMTEEEEHAMWIDDDIVAPNITDRGTVVSLALMSSNAYVRIPQTGDWRNVTEPWNETEPEDFGWDGDGIRGHVFYNEVENIVVLSIKGTSAQGLPGSGEDETTGNDKINDNLLFSCCCARVSYLWTTVCDCYVKSYICDESCLEKELRRKDRFYSAVVDIYKGVLKEYPDAAIWVTGHSLGGALASLLGRTFGLPAVAFESPGELLPSKRLHLPFPPGLPSYMEGIWHFGHNADPIFMGTCNGASSSCSLVGYAMETACHTGRVCVYDVVNDKGWSVNMFNHRIHKVIDEVLLGYEQAAKCVEPEPCVDCYNWKFIPSRDWESSSRLITKTKSHAAPTTTTRTTATTTSSSTCVGRNWLGFCTKYEL</sequence>
<proteinExistence type="evidence at protein level"/>
<gene>
    <name type="primary">ATG15</name>
    <name type="synonym">AUT5</name>
    <name type="synonym">CVT17</name>
    <name type="ordered locus">YCR068W</name>
    <name type="ORF">YCR68W</name>
</gene>
<organism>
    <name type="scientific">Saccharomyces cerevisiae (strain ATCC 204508 / S288c)</name>
    <name type="common">Baker's yeast</name>
    <dbReference type="NCBI Taxonomy" id="559292"/>
    <lineage>
        <taxon>Eukaryota</taxon>
        <taxon>Fungi</taxon>
        <taxon>Dikarya</taxon>
        <taxon>Ascomycota</taxon>
        <taxon>Saccharomycotina</taxon>
        <taxon>Saccharomycetes</taxon>
        <taxon>Saccharomycetales</taxon>
        <taxon>Saccharomycetaceae</taxon>
        <taxon>Saccharomyces</taxon>
    </lineage>
</organism>
<keyword id="KW-0072">Autophagy</keyword>
<keyword id="KW-0967">Endosome</keyword>
<keyword id="KW-0325">Glycoprotein</keyword>
<keyword id="KW-0378">Hydrolase</keyword>
<keyword id="KW-0442">Lipid degradation</keyword>
<keyword id="KW-0443">Lipid metabolism</keyword>
<keyword id="KW-0472">Membrane</keyword>
<keyword id="KW-1185">Reference proteome</keyword>
<keyword id="KW-0735">Signal-anchor</keyword>
<keyword id="KW-0812">Transmembrane</keyword>
<keyword id="KW-1133">Transmembrane helix</keyword>
<comment type="function">
    <text evidence="3 4 5 6 8 9 10">Lipase which is essential for lysis of subvacuolar cytoplasm to vacuole targeted bodies and intravacuolar autophagic bodies. Involved in the lysis of intravacuolar multivesicular body (MVB) vesicles. The intravacuolar membrane disintegration by ATG15 is critical to life span extension.</text>
</comment>
<comment type="catalytic activity">
    <reaction>
        <text>a triacylglycerol + H2O = a diacylglycerol + a fatty acid + H(+)</text>
        <dbReference type="Rhea" id="RHEA:12044"/>
        <dbReference type="ChEBI" id="CHEBI:15377"/>
        <dbReference type="ChEBI" id="CHEBI:15378"/>
        <dbReference type="ChEBI" id="CHEBI:17855"/>
        <dbReference type="ChEBI" id="CHEBI:18035"/>
        <dbReference type="ChEBI" id="CHEBI:28868"/>
        <dbReference type="EC" id="3.1.1.3"/>
    </reaction>
</comment>
<comment type="subunit">
    <text>Binds to both phosphatidylinositol (PI) and phosphatidylinositol 3,5-bisphosphate (PIP2).</text>
</comment>
<comment type="subcellular location">
    <subcellularLocation>
        <location evidence="6">Endosome</location>
        <location evidence="6">Multivesicular body membrane</location>
        <topology evidence="6">Single-pass type II membrane protein</topology>
    </subcellularLocation>
    <subcellularLocation>
        <location evidence="6">Prevacuolar compartment membrane</location>
        <topology evidence="6">Single-pass type II membrane protein</topology>
    </subcellularLocation>
    <text evidence="6">From ER, targeted to vacuolar lumen at the MVB vesicles via the Golgi and the prevacuolar compartment (PVC).</text>
</comment>
<comment type="PTM">
    <text evidence="3 5 6">Glycosylated.</text>
</comment>
<comment type="miscellaneous">
    <text evidence="7">Present with 3060 molecules/cell in log phase SD medium.</text>
</comment>
<comment type="similarity">
    <text evidence="11">Belongs to the AB hydrolase superfamily. Lipase family.</text>
</comment>
<name>ATG15_YEAST</name>
<reference key="1">
    <citation type="journal article" date="2001" name="J. Biol. Chem.">
        <title>Degradation of lipid vesicles in the yeast vacuole requires function of Cvt17, a putative lipase.</title>
        <authorList>
            <person name="Teter S.A."/>
            <person name="Eggerton K.P."/>
            <person name="Scott S.V."/>
            <person name="Kim J."/>
            <person name="Fischer A.M."/>
            <person name="Klionsky D.J."/>
        </authorList>
    </citation>
    <scope>NUCLEOTIDE SEQUENCE [GENOMIC DNA]</scope>
    <scope>FUNCTION</scope>
    <scope>GLYCOSYLATION</scope>
    <scope>MUTAGENESIS OF SER-332</scope>
</reference>
<reference key="2">
    <citation type="journal article" date="1992" name="Nature">
        <title>The complete DNA sequence of yeast chromosome III.</title>
        <authorList>
            <person name="Oliver S.G."/>
            <person name="van der Aart Q.J.M."/>
            <person name="Agostoni-Carbone M.L."/>
            <person name="Aigle M."/>
            <person name="Alberghina L."/>
            <person name="Alexandraki D."/>
            <person name="Antoine G."/>
            <person name="Anwar R."/>
            <person name="Ballesta J.P.G."/>
            <person name="Benit P."/>
            <person name="Berben G."/>
            <person name="Bergantino E."/>
            <person name="Biteau N."/>
            <person name="Bolle P.-A."/>
            <person name="Bolotin-Fukuhara M."/>
            <person name="Brown A."/>
            <person name="Brown A.J.P."/>
            <person name="Buhler J.-M."/>
            <person name="Carcano C."/>
            <person name="Carignani G."/>
            <person name="Cederberg H."/>
            <person name="Chanet R."/>
            <person name="Contreras R."/>
            <person name="Crouzet M."/>
            <person name="Daignan-Fornier B."/>
            <person name="Defoor E."/>
            <person name="Delgado M.D."/>
            <person name="Demolder J."/>
            <person name="Doira C."/>
            <person name="Dubois E."/>
            <person name="Dujon B."/>
            <person name="Duesterhoeft A."/>
            <person name="Erdmann D."/>
            <person name="Esteban M."/>
            <person name="Fabre F."/>
            <person name="Fairhead C."/>
            <person name="Faye G."/>
            <person name="Feldmann H."/>
            <person name="Fiers W."/>
            <person name="Francingues-Gaillard M.-C."/>
            <person name="Franco L."/>
            <person name="Frontali L."/>
            <person name="Fukuhara H."/>
            <person name="Fuller L.J."/>
            <person name="Galland P."/>
            <person name="Gent M.E."/>
            <person name="Gigot D."/>
            <person name="Gilliquet V."/>
            <person name="Glansdorff N."/>
            <person name="Goffeau A."/>
            <person name="Grenson M."/>
            <person name="Grisanti P."/>
            <person name="Grivell L.A."/>
            <person name="de Haan M."/>
            <person name="Haasemann M."/>
            <person name="Hatat D."/>
            <person name="Hoenicka J."/>
            <person name="Hegemann J.H."/>
            <person name="Herbert C.J."/>
            <person name="Hilger F."/>
            <person name="Hohmann S."/>
            <person name="Hollenberg C.P."/>
            <person name="Huse K."/>
            <person name="Iborra F."/>
            <person name="Indge K.J."/>
            <person name="Isono K."/>
            <person name="Jacq C."/>
            <person name="Jacquet M."/>
            <person name="James C.M."/>
            <person name="Jauniaux J.-C."/>
            <person name="Jia Y."/>
            <person name="Jimenez A."/>
            <person name="Kelly A."/>
            <person name="Kleinhans U."/>
            <person name="Kreisl P."/>
            <person name="Lanfranchi G."/>
            <person name="Lewis C."/>
            <person name="van der Linden C.G."/>
            <person name="Lucchini G."/>
            <person name="Lutzenkirchen K."/>
            <person name="Maat M.J."/>
            <person name="Mallet L."/>
            <person name="Mannhaupt G."/>
            <person name="Martegani E."/>
            <person name="Mathieu A."/>
            <person name="Maurer C.T.C."/>
            <person name="McConnell D."/>
            <person name="McKee R.A."/>
            <person name="Messenguy F."/>
            <person name="Mewes H.-W."/>
            <person name="Molemans F."/>
            <person name="Montague M.A."/>
            <person name="Muzi Falconi M."/>
            <person name="Navas L."/>
            <person name="Newlon C.S."/>
            <person name="Noone D."/>
            <person name="Pallier C."/>
            <person name="Panzeri L."/>
            <person name="Pearson B.M."/>
            <person name="Perea J."/>
            <person name="Philippsen P."/>
            <person name="Pierard A."/>
            <person name="Planta R.J."/>
            <person name="Plevani P."/>
            <person name="Poetsch B."/>
            <person name="Pohl F.M."/>
            <person name="Purnelle B."/>
            <person name="Ramezani Rad M."/>
            <person name="Rasmussen S.W."/>
            <person name="Raynal A."/>
            <person name="Remacha M.A."/>
            <person name="Richterich P."/>
            <person name="Roberts A.B."/>
            <person name="Rodriguez F."/>
            <person name="Sanz E."/>
            <person name="Schaaff-Gerstenschlaeger I."/>
            <person name="Scherens B."/>
            <person name="Schweitzer B."/>
            <person name="Shu Y."/>
            <person name="Skala J."/>
            <person name="Slonimski P.P."/>
            <person name="Sor F."/>
            <person name="Soustelle C."/>
            <person name="Spiegelberg R."/>
            <person name="Stateva L.I."/>
            <person name="Steensma H.Y."/>
            <person name="Steiner S."/>
            <person name="Thierry A."/>
            <person name="Thireos G."/>
            <person name="Tzermia M."/>
            <person name="Urrestarazu L.A."/>
            <person name="Valle G."/>
            <person name="Vetter I."/>
            <person name="van Vliet-Reedijk J.C."/>
            <person name="Voet M."/>
            <person name="Volckaert G."/>
            <person name="Vreken P."/>
            <person name="Wang H."/>
            <person name="Warmington J.R."/>
            <person name="von Wettstein D."/>
            <person name="Wicksteed B.L."/>
            <person name="Wilson C."/>
            <person name="Wurst H."/>
            <person name="Xu G."/>
            <person name="Yoshikawa A."/>
            <person name="Zimmermann F.K."/>
            <person name="Sgouros J.G."/>
        </authorList>
    </citation>
    <scope>NUCLEOTIDE SEQUENCE [LARGE SCALE GENOMIC DNA]</scope>
    <source>
        <strain>ATCC 204508 / S288c</strain>
    </source>
</reference>
<reference key="3">
    <citation type="submission" date="2001-06" db="EMBL/GenBank/DDBJ databases">
        <authorList>
            <person name="Valles G."/>
            <person name="Volckaerts G."/>
        </authorList>
    </citation>
    <scope>SEQUENCE REVISION TO C-TERMINUS</scope>
</reference>
<reference key="4">
    <citation type="journal article" date="2014" name="G3 (Bethesda)">
        <title>The reference genome sequence of Saccharomyces cerevisiae: Then and now.</title>
        <authorList>
            <person name="Engel S.R."/>
            <person name="Dietrich F.S."/>
            <person name="Fisk D.G."/>
            <person name="Binkley G."/>
            <person name="Balakrishnan R."/>
            <person name="Costanzo M.C."/>
            <person name="Dwight S.S."/>
            <person name="Hitz B.C."/>
            <person name="Karra K."/>
            <person name="Nash R.S."/>
            <person name="Weng S."/>
            <person name="Wong E.D."/>
            <person name="Lloyd P."/>
            <person name="Skrzypek M.S."/>
            <person name="Miyasato S.R."/>
            <person name="Simison M."/>
            <person name="Cherry J.M."/>
        </authorList>
    </citation>
    <scope>GENOME REANNOTATION</scope>
    <source>
        <strain>ATCC 204508 / S288c</strain>
    </source>
</reference>
<reference key="5">
    <citation type="journal article" date="2001" name="J. Bacteriol.">
        <title>Aut5/Cvt17p, a putative lipase essential for disintegration of autophagic bodies inside the vacuole.</title>
        <authorList>
            <person name="Epple U.D."/>
            <person name="Suriapranata I."/>
            <person name="Eskelinen E.-L."/>
            <person name="Thumm M."/>
        </authorList>
    </citation>
    <scope>FUNCTION</scope>
    <scope>SUBCELLULAR LOCATION</scope>
    <scope>GLYCOSYLATION</scope>
    <scope>MUTAGENESIS OF SER-332</scope>
</reference>
<reference key="6">
    <citation type="journal article" date="2001" name="J. Biol. Chem.">
        <title>Vacuolar localization of oligomeric alpha-mannosidase requires the cytoplasm to vacuole targeting and autophagy pathway components in Saccharomyces cerevisiae.</title>
        <authorList>
            <person name="Hutchins M.U."/>
            <person name="Klionsky D.J."/>
        </authorList>
    </citation>
    <scope>FUNCTION</scope>
</reference>
<reference key="7">
    <citation type="journal article" date="2003" name="J. Biol. Chem.">
        <title>Intravacuolar membrane lysis in Saccharomyces cerevisiae. Does vacuolar targeting of Cvt17/Aut5p affect its function?</title>
        <authorList>
            <person name="Epple U.D."/>
            <person name="Eskelinen E.-L."/>
            <person name="Thumm M."/>
        </authorList>
    </citation>
    <scope>FUNCTION</scope>
    <scope>SUBCELLULAR LOCATION</scope>
    <scope>TOPOLOGY</scope>
    <scope>GLYCOSYLATION</scope>
</reference>
<reference key="8">
    <citation type="journal article" date="2003" name="Nature">
        <title>Global analysis of protein expression in yeast.</title>
        <authorList>
            <person name="Ghaemmaghami S."/>
            <person name="Huh W.-K."/>
            <person name="Bower K."/>
            <person name="Howson R.W."/>
            <person name="Belle A."/>
            <person name="Dephoure N."/>
            <person name="O'Shea E.K."/>
            <person name="Weissman J.S."/>
        </authorList>
    </citation>
    <scope>LEVEL OF PROTEIN EXPRESSION [LARGE SCALE ANALYSIS]</scope>
</reference>
<reference key="9">
    <citation type="journal article" date="2008" name="Autophagy">
        <title>A life-span extending form of autophagy employs the vacuole-vacuole fusion machinery.</title>
        <authorList>
            <person name="Tang F."/>
            <person name="Watkins J.W."/>
            <person name="Bermudez M."/>
            <person name="Gray R."/>
            <person name="Gaban A."/>
            <person name="Portie K."/>
            <person name="Grace S."/>
            <person name="Kleve M."/>
            <person name="Craciun G."/>
        </authorList>
    </citation>
    <scope>FUNCTION</scope>
</reference>
<reference key="10">
    <citation type="journal article" date="2011" name="PLoS ONE">
        <title>Starvation induced cell death in autophagy-defective yeast mutants is caused by mitochondria dysfunction.</title>
        <authorList>
            <person name="Suzuki S.W."/>
            <person name="Onodera J."/>
            <person name="Ohsumi Y."/>
        </authorList>
    </citation>
    <scope>FUNCTION</scope>
</reference>
<reference key="11">
    <citation type="journal article" date="2011" name="Traffic">
        <title>An overexpression screen in Saccharomyces cerevisiae identifies novel genes that affect endocytic protein trafficking.</title>
        <authorList>
            <person name="Arlt H."/>
            <person name="Perz A."/>
            <person name="Ungermann C."/>
        </authorList>
    </citation>
    <scope>FUNCTION</scope>
</reference>
<reference key="12">
    <citation type="journal article" date="2012" name="Mol. Cell. Proteomics">
        <title>Profiling lipid-protein interactions using nonquenched fluorescent liposomal nanovesicles and proteome microarrays.</title>
        <authorList>
            <person name="Lu K.Y."/>
            <person name="Tao S.C."/>
            <person name="Yang T.C."/>
            <person name="Ho Y.H."/>
            <person name="Lee C.H."/>
            <person name="Lin C.C."/>
            <person name="Juan H.F."/>
            <person name="Huang H.C."/>
            <person name="Yang C.Y."/>
            <person name="Chen M.S."/>
            <person name="Lin Y.Y."/>
            <person name="Lu J.Y."/>
            <person name="Zhu H."/>
            <person name="Chen C.S."/>
        </authorList>
    </citation>
    <scope>PHOSPHOINOSITIDES-BINDING</scope>
</reference>
<evidence type="ECO:0000255" key="1"/>
<evidence type="ECO:0000255" key="2">
    <source>
        <dbReference type="PROSITE-ProRule" id="PRU10037"/>
    </source>
</evidence>
<evidence type="ECO:0000269" key="3">
    <source>
    </source>
</evidence>
<evidence type="ECO:0000269" key="4">
    <source>
    </source>
</evidence>
<evidence type="ECO:0000269" key="5">
    <source>
    </source>
</evidence>
<evidence type="ECO:0000269" key="6">
    <source>
    </source>
</evidence>
<evidence type="ECO:0000269" key="7">
    <source>
    </source>
</evidence>
<evidence type="ECO:0000269" key="8">
    <source>
    </source>
</evidence>
<evidence type="ECO:0000269" key="9">
    <source>
    </source>
</evidence>
<evidence type="ECO:0000269" key="10">
    <source>
    </source>
</evidence>
<evidence type="ECO:0000305" key="11"/>
<protein>
    <recommendedName>
        <fullName>Putative lipase ATG15</fullName>
        <ecNumber>3.1.1.3</ecNumber>
    </recommendedName>
    <alternativeName>
        <fullName>Autophagy-related protein 15</fullName>
    </alternativeName>
    <alternativeName>
        <fullName>Cytoplasm to vacuole targeting protein 17</fullName>
    </alternativeName>
</protein>
<feature type="chain" id="PRO_0000090372" description="Putative lipase ATG15">
    <location>
        <begin position="1"/>
        <end position="520"/>
    </location>
</feature>
<feature type="topological domain" description="Cytoplasmic" evidence="6">
    <location>
        <begin position="1"/>
        <end position="14"/>
    </location>
</feature>
<feature type="transmembrane region" description="Helical; Signal-anchor for type II membrane protein">
    <location>
        <begin position="15"/>
        <end position="35"/>
    </location>
</feature>
<feature type="topological domain" description="Lumenal" evidence="6">
    <location>
        <begin position="36"/>
        <end position="520"/>
    </location>
</feature>
<feature type="active site" description="Charge relay system" evidence="2">
    <location>
        <position position="332"/>
    </location>
</feature>
<feature type="glycosylation site" description="N-linked (GlcNAc...) asparagine" evidence="1">
    <location>
        <position position="173"/>
    </location>
</feature>
<feature type="glycosylation site" description="N-linked (GlcNAc...) asparagine" evidence="1">
    <location>
        <position position="202"/>
    </location>
</feature>
<feature type="glycosylation site" description="N-linked (GlcNAc...) asparagine" evidence="1">
    <location>
        <position position="208"/>
    </location>
</feature>
<feature type="mutagenesis site" description="Loss of function." evidence="3 5">
    <original>S</original>
    <variation>A</variation>
    <location>
        <position position="332"/>
    </location>
</feature>
<dbReference type="EC" id="3.1.1.3"/>
<dbReference type="EMBL" id="X59720">
    <property type="protein sequence ID" value="CAC42987.1"/>
    <property type="molecule type" value="Genomic_DNA"/>
</dbReference>
<dbReference type="EMBL" id="BK006937">
    <property type="protein sequence ID" value="DAA07540.1"/>
    <property type="molecule type" value="Genomic_DNA"/>
</dbReference>
<dbReference type="PIR" id="S19483">
    <property type="entry name" value="S19483"/>
</dbReference>
<dbReference type="PIR" id="S74292">
    <property type="entry name" value="S74292"/>
</dbReference>
<dbReference type="RefSeq" id="NP_009994.2">
    <property type="nucleotide sequence ID" value="NM_001178779.1"/>
</dbReference>
<dbReference type="BioGRID" id="31044">
    <property type="interactions" value="322"/>
</dbReference>
<dbReference type="DIP" id="DIP-5001N"/>
<dbReference type="FunCoup" id="P25641">
    <property type="interactions" value="100"/>
</dbReference>
<dbReference type="IntAct" id="P25641">
    <property type="interactions" value="8"/>
</dbReference>
<dbReference type="MINT" id="P25641"/>
<dbReference type="STRING" id="4932.YCR068W"/>
<dbReference type="ESTHER" id="yeast-ATG15">
    <property type="family name" value="ATG15-related-lipase"/>
</dbReference>
<dbReference type="TCDB" id="8.A.178.1.1">
    <property type="family name" value="the lipase atg15 (atg15) family"/>
</dbReference>
<dbReference type="GlyCosmos" id="P25641">
    <property type="glycosylation" value="3 sites, No reported glycans"/>
</dbReference>
<dbReference type="GlyGen" id="P25641">
    <property type="glycosylation" value="3 sites"/>
</dbReference>
<dbReference type="PaxDb" id="4932-YCR068W"/>
<dbReference type="PeptideAtlas" id="P25641"/>
<dbReference type="EnsemblFungi" id="YCR068W_mRNA">
    <property type="protein sequence ID" value="YCR068W"/>
    <property type="gene ID" value="YCR068W"/>
</dbReference>
<dbReference type="GeneID" id="850432"/>
<dbReference type="KEGG" id="sce:YCR068W"/>
<dbReference type="AGR" id="SGD:S000000664"/>
<dbReference type="SGD" id="S000000664">
    <property type="gene designation" value="ATG15"/>
</dbReference>
<dbReference type="VEuPathDB" id="FungiDB:YCR068W"/>
<dbReference type="eggNOG" id="KOG4540">
    <property type="taxonomic scope" value="Eukaryota"/>
</dbReference>
<dbReference type="HOGENOM" id="CLU_028295_0_2_1"/>
<dbReference type="InParanoid" id="P25641"/>
<dbReference type="OMA" id="CHDCYNW"/>
<dbReference type="OrthoDB" id="58570at2759"/>
<dbReference type="BioCyc" id="YEAST:YCR068W-MONOMER"/>
<dbReference type="BioGRID-ORCS" id="850432">
    <property type="hits" value="9 hits in 10 CRISPR screens"/>
</dbReference>
<dbReference type="PRO" id="PR:P25641"/>
<dbReference type="Proteomes" id="UP000002311">
    <property type="component" value="Chromosome III"/>
</dbReference>
<dbReference type="RNAct" id="P25641">
    <property type="molecule type" value="protein"/>
</dbReference>
<dbReference type="GO" id="GO:0005783">
    <property type="term" value="C:endoplasmic reticulum"/>
    <property type="evidence" value="ECO:0000314"/>
    <property type="project" value="SGD"/>
</dbReference>
<dbReference type="GO" id="GO:0016020">
    <property type="term" value="C:membrane"/>
    <property type="evidence" value="ECO:0000314"/>
    <property type="project" value="UniProtKB"/>
</dbReference>
<dbReference type="GO" id="GO:0032585">
    <property type="term" value="C:multivesicular body membrane"/>
    <property type="evidence" value="ECO:0007669"/>
    <property type="project" value="UniProtKB-SubCell"/>
</dbReference>
<dbReference type="GO" id="GO:0005775">
    <property type="term" value="C:vacuolar lumen"/>
    <property type="evidence" value="ECO:0000314"/>
    <property type="project" value="UniProtKB"/>
</dbReference>
<dbReference type="GO" id="GO:0005774">
    <property type="term" value="C:vacuolar membrane"/>
    <property type="evidence" value="ECO:0000314"/>
    <property type="project" value="SGD"/>
</dbReference>
<dbReference type="GO" id="GO:0005773">
    <property type="term" value="C:vacuole"/>
    <property type="evidence" value="ECO:0000314"/>
    <property type="project" value="SGD"/>
</dbReference>
<dbReference type="GO" id="GO:0004620">
    <property type="term" value="F:phospholipase activity"/>
    <property type="evidence" value="ECO:0000314"/>
    <property type="project" value="SGD"/>
</dbReference>
<dbReference type="GO" id="GO:0004806">
    <property type="term" value="F:triacylglycerol lipase activity"/>
    <property type="evidence" value="ECO:0007669"/>
    <property type="project" value="UniProtKB-EC"/>
</dbReference>
<dbReference type="GO" id="GO:0006914">
    <property type="term" value="P:autophagy"/>
    <property type="evidence" value="ECO:0000314"/>
    <property type="project" value="UniProtKB"/>
</dbReference>
<dbReference type="GO" id="GO:0030397">
    <property type="term" value="P:membrane disassembly"/>
    <property type="evidence" value="ECO:0000314"/>
    <property type="project" value="UniProtKB"/>
</dbReference>
<dbReference type="GO" id="GO:0034496">
    <property type="term" value="P:multivesicular body membrane disassembly"/>
    <property type="evidence" value="ECO:0000315"/>
    <property type="project" value="SGD"/>
</dbReference>
<dbReference type="GO" id="GO:0046461">
    <property type="term" value="P:neutral lipid catabolic process"/>
    <property type="evidence" value="ECO:0000315"/>
    <property type="project" value="SGD"/>
</dbReference>
<dbReference type="GO" id="GO:0000425">
    <property type="term" value="P:pexophagy"/>
    <property type="evidence" value="ECO:0000315"/>
    <property type="project" value="SGD"/>
</dbReference>
<dbReference type="GO" id="GO:0006660">
    <property type="term" value="P:phosphatidylserine catabolic process"/>
    <property type="evidence" value="ECO:0000314"/>
    <property type="project" value="SGD"/>
</dbReference>
<dbReference type="GO" id="GO:0034727">
    <property type="term" value="P:piecemeal microautophagy of the nucleus"/>
    <property type="evidence" value="ECO:0000315"/>
    <property type="project" value="SGD"/>
</dbReference>
<dbReference type="GO" id="GO:0006624">
    <property type="term" value="P:vacuolar protein processing"/>
    <property type="evidence" value="ECO:0000314"/>
    <property type="project" value="UniProtKB"/>
</dbReference>
<dbReference type="CDD" id="cd00519">
    <property type="entry name" value="Lipase_3"/>
    <property type="match status" value="1"/>
</dbReference>
<dbReference type="FunFam" id="3.40.50.1820:FF:000339">
    <property type="entry name" value="Lipase, putative"/>
    <property type="match status" value="1"/>
</dbReference>
<dbReference type="Gene3D" id="3.40.50.1820">
    <property type="entry name" value="alpha/beta hydrolase"/>
    <property type="match status" value="1"/>
</dbReference>
<dbReference type="InterPro" id="IPR029058">
    <property type="entry name" value="AB_hydrolase_fold"/>
</dbReference>
<dbReference type="InterPro" id="IPR050805">
    <property type="entry name" value="ATG15_Lipase"/>
</dbReference>
<dbReference type="InterPro" id="IPR002921">
    <property type="entry name" value="Fungal_lipase-type"/>
</dbReference>
<dbReference type="PANTHER" id="PTHR47175">
    <property type="entry name" value="LIPASE ATG15-RELATED"/>
    <property type="match status" value="1"/>
</dbReference>
<dbReference type="PANTHER" id="PTHR47175:SF2">
    <property type="entry name" value="LIPASE ATG15-RELATED"/>
    <property type="match status" value="1"/>
</dbReference>
<dbReference type="Pfam" id="PF01764">
    <property type="entry name" value="Lipase_3"/>
    <property type="match status" value="1"/>
</dbReference>
<dbReference type="SUPFAM" id="SSF53474">
    <property type="entry name" value="alpha/beta-Hydrolases"/>
    <property type="match status" value="1"/>
</dbReference>
<dbReference type="PROSITE" id="PS00120">
    <property type="entry name" value="LIPASE_SER"/>
    <property type="match status" value="1"/>
</dbReference>
<accession>P25641</accession>
<accession>D6VR71</accession>
<accession>Q8NIL6</accession>